<keyword id="KW-0997">Cell inner membrane</keyword>
<keyword id="KW-1003">Cell membrane</keyword>
<keyword id="KW-0406">Ion transport</keyword>
<keyword id="KW-0472">Membrane</keyword>
<keyword id="KW-0630">Potassium</keyword>
<keyword id="KW-0633">Potassium transport</keyword>
<keyword id="KW-1185">Reference proteome</keyword>
<keyword id="KW-0769">Symport</keyword>
<keyword id="KW-0812">Transmembrane</keyword>
<keyword id="KW-1133">Transmembrane helix</keyword>
<keyword id="KW-0813">Transport</keyword>
<sequence length="624" mass="66902">MSQPHSVPNTRALALGALGVVFGDIGTSPLYTMKEVFGGHHLALTQDNVLGILSLIFWALILVVSLKYVLVIMRADNKGEGGILALLSLVQGQAPLRSRARWIIMSLGFLGASLFFGDSLITPAISVLSAVEGLEIGAPALHPFILPLALGILVGLFAIQRRGTASIGRLFGPIMLLWFAVLGVLGAIGIAKHPQVLAALLPIHAIQFFMTHGTAGFLILGAVVLAITGAEALYADMGHFGTRPIRLTWFGFVLPALVVNYFGQGALLLAEPAAVRNPFYMLAPDWALYPMVALATAATVIASQAVISGAFSVTRQVVQMGYAPRLVIRHTSATAAGQIYIPFVNWTLAAGVALLVLGFQSSSNLAAAYGIAVTATFAIDTVLLALLMRVNWNLGRAPTLVAAALFLTLDLAFFGANAVKIPEGGWFPLVVAVVVFTILVTWRRGREIVGARLHERGLPLAPFVESLLAHPPARVGGTAVFMTTDPSGVPLALLHNLKHNKVLHERVVILNVRYGEVPYVPAEHRLAVTKLGEGVFHVVVRYGFMDDVDIPKALAECPCGMDFDMMDTTFFLSRENLIPARGDGGMMVWREHLFATMARNAASPMTFFRIPPNRVVELGAQLEI</sequence>
<reference key="1">
    <citation type="journal article" date="2006" name="J. Bacteriol.">
        <title>The genome sequence of the obligately chemolithoautotrophic, facultatively anaerobic bacterium Thiobacillus denitrificans.</title>
        <authorList>
            <person name="Beller H.R."/>
            <person name="Chain P.S."/>
            <person name="Letain T.E."/>
            <person name="Chakicherla A."/>
            <person name="Larimer F.W."/>
            <person name="Richardson P.M."/>
            <person name="Coleman M.A."/>
            <person name="Wood A.P."/>
            <person name="Kelly D.P."/>
        </authorList>
    </citation>
    <scope>NUCLEOTIDE SEQUENCE [LARGE SCALE GENOMIC DNA]</scope>
    <source>
        <strain>ATCC 25259 / T1</strain>
    </source>
</reference>
<proteinExistence type="inferred from homology"/>
<evidence type="ECO:0000255" key="1">
    <source>
        <dbReference type="HAMAP-Rule" id="MF_01522"/>
    </source>
</evidence>
<protein>
    <recommendedName>
        <fullName evidence="1">Probable potassium transport system protein Kup</fullName>
    </recommendedName>
</protein>
<organism>
    <name type="scientific">Thiobacillus denitrificans (strain ATCC 25259 / T1)</name>
    <dbReference type="NCBI Taxonomy" id="292415"/>
    <lineage>
        <taxon>Bacteria</taxon>
        <taxon>Pseudomonadati</taxon>
        <taxon>Pseudomonadota</taxon>
        <taxon>Betaproteobacteria</taxon>
        <taxon>Nitrosomonadales</taxon>
        <taxon>Thiobacillaceae</taxon>
        <taxon>Thiobacillus</taxon>
    </lineage>
</organism>
<dbReference type="EMBL" id="CP000116">
    <property type="protein sequence ID" value="AAZ98018.1"/>
    <property type="molecule type" value="Genomic_DNA"/>
</dbReference>
<dbReference type="RefSeq" id="WP_011312577.1">
    <property type="nucleotide sequence ID" value="NC_007404.1"/>
</dbReference>
<dbReference type="STRING" id="292415.Tbd_2065"/>
<dbReference type="KEGG" id="tbd:Tbd_2065"/>
<dbReference type="eggNOG" id="COG3158">
    <property type="taxonomic scope" value="Bacteria"/>
</dbReference>
<dbReference type="HOGENOM" id="CLU_008142_4_2_4"/>
<dbReference type="OrthoDB" id="9805577at2"/>
<dbReference type="Proteomes" id="UP000008291">
    <property type="component" value="Chromosome"/>
</dbReference>
<dbReference type="GO" id="GO:0005886">
    <property type="term" value="C:plasma membrane"/>
    <property type="evidence" value="ECO:0007669"/>
    <property type="project" value="UniProtKB-SubCell"/>
</dbReference>
<dbReference type="GO" id="GO:0015079">
    <property type="term" value="F:potassium ion transmembrane transporter activity"/>
    <property type="evidence" value="ECO:0007669"/>
    <property type="project" value="UniProtKB-UniRule"/>
</dbReference>
<dbReference type="GO" id="GO:0015293">
    <property type="term" value="F:symporter activity"/>
    <property type="evidence" value="ECO:0007669"/>
    <property type="project" value="UniProtKB-UniRule"/>
</dbReference>
<dbReference type="HAMAP" id="MF_01522">
    <property type="entry name" value="Kup"/>
    <property type="match status" value="1"/>
</dbReference>
<dbReference type="InterPro" id="IPR003855">
    <property type="entry name" value="K+_transporter"/>
</dbReference>
<dbReference type="InterPro" id="IPR053952">
    <property type="entry name" value="K_trans_C"/>
</dbReference>
<dbReference type="InterPro" id="IPR053951">
    <property type="entry name" value="K_trans_N"/>
</dbReference>
<dbReference type="InterPro" id="IPR023051">
    <property type="entry name" value="Kup"/>
</dbReference>
<dbReference type="PANTHER" id="PTHR30540:SF79">
    <property type="entry name" value="LOW AFFINITY POTASSIUM TRANSPORT SYSTEM PROTEIN KUP"/>
    <property type="match status" value="1"/>
</dbReference>
<dbReference type="PANTHER" id="PTHR30540">
    <property type="entry name" value="OSMOTIC STRESS POTASSIUM TRANSPORTER"/>
    <property type="match status" value="1"/>
</dbReference>
<dbReference type="Pfam" id="PF02705">
    <property type="entry name" value="K_trans"/>
    <property type="match status" value="1"/>
</dbReference>
<dbReference type="Pfam" id="PF22776">
    <property type="entry name" value="K_trans_C"/>
    <property type="match status" value="1"/>
</dbReference>
<comment type="function">
    <text evidence="1">Transport of potassium into the cell. Likely operates as a K(+):H(+) symporter.</text>
</comment>
<comment type="catalytic activity">
    <reaction evidence="1">
        <text>K(+)(in) + H(+)(in) = K(+)(out) + H(+)(out)</text>
        <dbReference type="Rhea" id="RHEA:28490"/>
        <dbReference type="ChEBI" id="CHEBI:15378"/>
        <dbReference type="ChEBI" id="CHEBI:29103"/>
    </reaction>
    <physiologicalReaction direction="right-to-left" evidence="1">
        <dbReference type="Rhea" id="RHEA:28492"/>
    </physiologicalReaction>
</comment>
<comment type="subcellular location">
    <subcellularLocation>
        <location evidence="1">Cell inner membrane</location>
        <topology evidence="1">Multi-pass membrane protein</topology>
    </subcellularLocation>
</comment>
<comment type="similarity">
    <text evidence="1">Belongs to the HAK/KUP transporter (TC 2.A.72) family.</text>
</comment>
<feature type="chain" id="PRO_0000279841" description="Probable potassium transport system protein Kup">
    <location>
        <begin position="1"/>
        <end position="624"/>
    </location>
</feature>
<feature type="transmembrane region" description="Helical" evidence="1">
    <location>
        <begin position="13"/>
        <end position="33"/>
    </location>
</feature>
<feature type="transmembrane region" description="Helical" evidence="1">
    <location>
        <begin position="52"/>
        <end position="72"/>
    </location>
</feature>
<feature type="transmembrane region" description="Helical" evidence="1">
    <location>
        <begin position="102"/>
        <end position="122"/>
    </location>
</feature>
<feature type="transmembrane region" description="Helical" evidence="1">
    <location>
        <begin position="139"/>
        <end position="159"/>
    </location>
</feature>
<feature type="transmembrane region" description="Helical" evidence="1">
    <location>
        <begin position="170"/>
        <end position="190"/>
    </location>
</feature>
<feature type="transmembrane region" description="Helical" evidence="1">
    <location>
        <begin position="208"/>
        <end position="228"/>
    </location>
</feature>
<feature type="transmembrane region" description="Helical" evidence="1">
    <location>
        <begin position="249"/>
        <end position="269"/>
    </location>
</feature>
<feature type="transmembrane region" description="Helical" evidence="1">
    <location>
        <begin position="291"/>
        <end position="311"/>
    </location>
</feature>
<feature type="transmembrane region" description="Helical" evidence="1">
    <location>
        <begin position="339"/>
        <end position="359"/>
    </location>
</feature>
<feature type="transmembrane region" description="Helical" evidence="1">
    <location>
        <begin position="368"/>
        <end position="388"/>
    </location>
</feature>
<feature type="transmembrane region" description="Helical" evidence="1">
    <location>
        <begin position="399"/>
        <end position="419"/>
    </location>
</feature>
<feature type="transmembrane region" description="Helical" evidence="1">
    <location>
        <begin position="421"/>
        <end position="441"/>
    </location>
</feature>
<name>KUP_THIDA</name>
<gene>
    <name evidence="1" type="primary">kup</name>
    <name type="ordered locus">Tbd_2065</name>
</gene>
<accession>Q3SH71</accession>